<keyword id="KW-0472">Membrane</keyword>
<keyword id="KW-0576">Peroxisome</keyword>
<keyword id="KW-1185">Reference proteome</keyword>
<organism>
    <name type="scientific">Candida glabrata (strain ATCC 2001 / BCRC 20586 / JCM 3761 / NBRC 0622 / NRRL Y-65 / CBS 138)</name>
    <name type="common">Yeast</name>
    <name type="synonym">Nakaseomyces glabratus</name>
    <dbReference type="NCBI Taxonomy" id="284593"/>
    <lineage>
        <taxon>Eukaryota</taxon>
        <taxon>Fungi</taxon>
        <taxon>Dikarya</taxon>
        <taxon>Ascomycota</taxon>
        <taxon>Saccharomycotina</taxon>
        <taxon>Saccharomycetes</taxon>
        <taxon>Saccharomycetales</taxon>
        <taxon>Saccharomycetaceae</taxon>
        <taxon>Nakaseomyces</taxon>
    </lineage>
</organism>
<sequence length="342" mass="39252">MSTVKQRTRTEGKPQYPLMQSIKDTLKLKTTKRTNSEKKVSTLNDKSGSPIKSNSERRNGITRKVNGSKRLSAQRVALFKYNNVQVFNYVRNGNNSRKSSMSSLNSSGTVVMCNEYDSEVTNLKPQMLIGKGVLELYQIKTPAALDRKEQTMNYISLGRGGQIVHPILPKLKITKLRNENFKYLITFSNPERYWQIEFLQINGQLHDELLKITDEFESIISSVCIFIDENITKLASLKSNKTPPNNVNTLDQIKEKVQTATENDDDEAEELDYLLEDPIEQEPTSSFEYDVPTDLTEVFQRTMGRINSNGSRRYSSVPQFSHRRSMIRRSMSLFPEHEGRFS</sequence>
<proteinExistence type="inferred from homology"/>
<accession>Q6FKL0</accession>
<dbReference type="EMBL" id="CR380958">
    <property type="protein sequence ID" value="CAG62208.1"/>
    <property type="molecule type" value="Genomic_DNA"/>
</dbReference>
<dbReference type="RefSeq" id="XP_449234.1">
    <property type="nucleotide sequence ID" value="XM_449234.1"/>
</dbReference>
<dbReference type="FunCoup" id="Q6FKL0">
    <property type="interactions" value="26"/>
</dbReference>
<dbReference type="STRING" id="284593.Q6FKL0"/>
<dbReference type="EnsemblFungi" id="CAGL0L10736g-T">
    <property type="protein sequence ID" value="CAGL0L10736g-T-p1"/>
    <property type="gene ID" value="CAGL0L10736g"/>
</dbReference>
<dbReference type="KEGG" id="cgr:2891045"/>
<dbReference type="CGD" id="CAL0135098">
    <property type="gene designation" value="CAGL0L10736g"/>
</dbReference>
<dbReference type="VEuPathDB" id="FungiDB:CAGL0L10736g"/>
<dbReference type="eggNOG" id="ENOG502S7ZC">
    <property type="taxonomic scope" value="Eukaryota"/>
</dbReference>
<dbReference type="HOGENOM" id="CLU_055317_0_0_1"/>
<dbReference type="InParanoid" id="Q6FKL0"/>
<dbReference type="OMA" id="RFWEIEF"/>
<dbReference type="Proteomes" id="UP000002428">
    <property type="component" value="Chromosome L"/>
</dbReference>
<dbReference type="GO" id="GO:0005780">
    <property type="term" value="C:extrinsic component of intraperoxisomal membrane"/>
    <property type="evidence" value="ECO:0007669"/>
    <property type="project" value="InterPro"/>
</dbReference>
<dbReference type="GO" id="GO:0045033">
    <property type="term" value="P:peroxisome inheritance"/>
    <property type="evidence" value="ECO:0007669"/>
    <property type="project" value="InterPro"/>
</dbReference>
<dbReference type="InterPro" id="IPR024758">
    <property type="entry name" value="Inp1"/>
</dbReference>
<dbReference type="Pfam" id="PF12634">
    <property type="entry name" value="Inp1"/>
    <property type="match status" value="1"/>
</dbReference>
<dbReference type="PRINTS" id="PR02103">
    <property type="entry name" value="INPROXISOME1"/>
</dbReference>
<comment type="function">
    <text evidence="1">Required for peroxisome inheritance.</text>
</comment>
<comment type="subcellular location">
    <subcellularLocation>
        <location evidence="1">Peroxisome membrane</location>
        <topology evidence="1">Peripheral membrane protein</topology>
    </subcellularLocation>
</comment>
<comment type="similarity">
    <text evidence="3">Belongs to the INP1 family.</text>
</comment>
<reference key="1">
    <citation type="journal article" date="2004" name="Nature">
        <title>Genome evolution in yeasts.</title>
        <authorList>
            <person name="Dujon B."/>
            <person name="Sherman D."/>
            <person name="Fischer G."/>
            <person name="Durrens P."/>
            <person name="Casaregola S."/>
            <person name="Lafontaine I."/>
            <person name="de Montigny J."/>
            <person name="Marck C."/>
            <person name="Neuveglise C."/>
            <person name="Talla E."/>
            <person name="Goffard N."/>
            <person name="Frangeul L."/>
            <person name="Aigle M."/>
            <person name="Anthouard V."/>
            <person name="Babour A."/>
            <person name="Barbe V."/>
            <person name="Barnay S."/>
            <person name="Blanchin S."/>
            <person name="Beckerich J.-M."/>
            <person name="Beyne E."/>
            <person name="Bleykasten C."/>
            <person name="Boisrame A."/>
            <person name="Boyer J."/>
            <person name="Cattolico L."/>
            <person name="Confanioleri F."/>
            <person name="de Daruvar A."/>
            <person name="Despons L."/>
            <person name="Fabre E."/>
            <person name="Fairhead C."/>
            <person name="Ferry-Dumazet H."/>
            <person name="Groppi A."/>
            <person name="Hantraye F."/>
            <person name="Hennequin C."/>
            <person name="Jauniaux N."/>
            <person name="Joyet P."/>
            <person name="Kachouri R."/>
            <person name="Kerrest A."/>
            <person name="Koszul R."/>
            <person name="Lemaire M."/>
            <person name="Lesur I."/>
            <person name="Ma L."/>
            <person name="Muller H."/>
            <person name="Nicaud J.-M."/>
            <person name="Nikolski M."/>
            <person name="Oztas S."/>
            <person name="Ozier-Kalogeropoulos O."/>
            <person name="Pellenz S."/>
            <person name="Potier S."/>
            <person name="Richard G.-F."/>
            <person name="Straub M.-L."/>
            <person name="Suleau A."/>
            <person name="Swennen D."/>
            <person name="Tekaia F."/>
            <person name="Wesolowski-Louvel M."/>
            <person name="Westhof E."/>
            <person name="Wirth B."/>
            <person name="Zeniou-Meyer M."/>
            <person name="Zivanovic Y."/>
            <person name="Bolotin-Fukuhara M."/>
            <person name="Thierry A."/>
            <person name="Bouchier C."/>
            <person name="Caudron B."/>
            <person name="Scarpelli C."/>
            <person name="Gaillardin C."/>
            <person name="Weissenbach J."/>
            <person name="Wincker P."/>
            <person name="Souciet J.-L."/>
        </authorList>
    </citation>
    <scope>NUCLEOTIDE SEQUENCE [LARGE SCALE GENOMIC DNA]</scope>
    <source>
        <strain>ATCC 2001 / BCRC 20586 / JCM 3761 / NBRC 0622 / NRRL Y-65 / CBS 138</strain>
    </source>
</reference>
<gene>
    <name type="primary">INP1</name>
    <name type="ordered locus">CAGL0L10736g</name>
</gene>
<evidence type="ECO:0000250" key="1"/>
<evidence type="ECO:0000256" key="2">
    <source>
        <dbReference type="SAM" id="MobiDB-lite"/>
    </source>
</evidence>
<evidence type="ECO:0000305" key="3"/>
<feature type="chain" id="PRO_0000308710" description="Inheritance of peroxisomes protein 1">
    <location>
        <begin position="1"/>
        <end position="342"/>
    </location>
</feature>
<feature type="region of interest" description="Disordered" evidence="2">
    <location>
        <begin position="1"/>
        <end position="60"/>
    </location>
</feature>
<feature type="compositionally biased region" description="Polar residues" evidence="2">
    <location>
        <begin position="41"/>
        <end position="53"/>
    </location>
</feature>
<protein>
    <recommendedName>
        <fullName>Inheritance of peroxisomes protein 1</fullName>
    </recommendedName>
</protein>
<name>INP1_CANGA</name>